<gene>
    <name type="ordered locus">LPC_0273</name>
</gene>
<name>Y273_LEGPC</name>
<organism>
    <name type="scientific">Legionella pneumophila (strain Corby)</name>
    <dbReference type="NCBI Taxonomy" id="400673"/>
    <lineage>
        <taxon>Bacteria</taxon>
        <taxon>Pseudomonadati</taxon>
        <taxon>Pseudomonadota</taxon>
        <taxon>Gammaproteobacteria</taxon>
        <taxon>Legionellales</taxon>
        <taxon>Legionellaceae</taxon>
        <taxon>Legionella</taxon>
    </lineage>
</organism>
<evidence type="ECO:0000255" key="1">
    <source>
        <dbReference type="HAMAP-Rule" id="MF_00338"/>
    </source>
</evidence>
<protein>
    <recommendedName>
        <fullName evidence="1">UPF0145 protein LPC_0273</fullName>
    </recommendedName>
</protein>
<comment type="similarity">
    <text evidence="1">Belongs to the UPF0145 family.</text>
</comment>
<dbReference type="EMBL" id="CP000675">
    <property type="protein sequence ID" value="ABQ54269.1"/>
    <property type="molecule type" value="Genomic_DNA"/>
</dbReference>
<dbReference type="RefSeq" id="WP_011945443.1">
    <property type="nucleotide sequence ID" value="NZ_JAPMSS010000003.1"/>
</dbReference>
<dbReference type="SMR" id="A5IA69"/>
<dbReference type="KEGG" id="lpc:LPC_0273"/>
<dbReference type="HOGENOM" id="CLU_117144_1_1_6"/>
<dbReference type="Gene3D" id="3.30.110.70">
    <property type="entry name" value="Hypothetical protein apc22750. Chain B"/>
    <property type="match status" value="1"/>
</dbReference>
<dbReference type="HAMAP" id="MF_00338">
    <property type="entry name" value="UPF0145"/>
    <property type="match status" value="1"/>
</dbReference>
<dbReference type="InterPro" id="IPR035439">
    <property type="entry name" value="UPF0145_dom_sf"/>
</dbReference>
<dbReference type="InterPro" id="IPR002765">
    <property type="entry name" value="UPF0145_YbjQ-like"/>
</dbReference>
<dbReference type="PANTHER" id="PTHR34068:SF2">
    <property type="entry name" value="UPF0145 PROTEIN SCO3412"/>
    <property type="match status" value="1"/>
</dbReference>
<dbReference type="PANTHER" id="PTHR34068">
    <property type="entry name" value="UPF0145 PROTEIN YBJQ"/>
    <property type="match status" value="1"/>
</dbReference>
<dbReference type="Pfam" id="PF01906">
    <property type="entry name" value="YbjQ_1"/>
    <property type="match status" value="1"/>
</dbReference>
<dbReference type="SUPFAM" id="SSF117782">
    <property type="entry name" value="YbjQ-like"/>
    <property type="match status" value="1"/>
</dbReference>
<sequence length="105" mass="11211">MTMMITTGNSFEGKVIKQYLGIVRGIVVRSPTISQGLMGGLKSIVGGKIGAYSQMCEHAREEAFQLMIEHAQALNANGIIAMRYDTGEIGQAGTEVLCYGTAVII</sequence>
<feature type="chain" id="PRO_1000013011" description="UPF0145 protein LPC_0273">
    <location>
        <begin position="1"/>
        <end position="105"/>
    </location>
</feature>
<accession>A5IA69</accession>
<reference key="1">
    <citation type="submission" date="2006-11" db="EMBL/GenBank/DDBJ databases">
        <title>Identification and characterization of a new conjugation/ type IVA secretion system (trb/tra) of L. pneumophila Corby localized on a mobile genomic island.</title>
        <authorList>
            <person name="Gloeckner G."/>
            <person name="Albert-Weissenberger C."/>
            <person name="Weinmann E."/>
            <person name="Jacobi S."/>
            <person name="Schunder E."/>
            <person name="Steinert M."/>
            <person name="Buchrieser C."/>
            <person name="Hacker J."/>
            <person name="Heuner K."/>
        </authorList>
    </citation>
    <scope>NUCLEOTIDE SEQUENCE [LARGE SCALE GENOMIC DNA]</scope>
    <source>
        <strain>Corby</strain>
    </source>
</reference>
<proteinExistence type="inferred from homology"/>